<evidence type="ECO:0000250" key="1">
    <source>
        <dbReference type="UniProtKB" id="O95551"/>
    </source>
</evidence>
<evidence type="ECO:0000250" key="2">
    <source>
        <dbReference type="UniProtKB" id="Q9JJX7"/>
    </source>
</evidence>
<evidence type="ECO:0000256" key="3">
    <source>
        <dbReference type="SAM" id="MobiDB-lite"/>
    </source>
</evidence>
<evidence type="ECO:0000269" key="4">
    <source>
    </source>
</evidence>
<evidence type="ECO:0000305" key="5"/>
<evidence type="ECO:0000305" key="6">
    <source>
    </source>
</evidence>
<dbReference type="EC" id="3.1.4.-" evidence="2"/>
<dbReference type="EMBL" id="AADN02008334">
    <property type="status" value="NOT_ANNOTATED_CDS"/>
    <property type="molecule type" value="Genomic_DNA"/>
</dbReference>
<dbReference type="RefSeq" id="NP_001263313.1">
    <property type="nucleotide sequence ID" value="NM_001276384.1"/>
</dbReference>
<dbReference type="SMR" id="F1NW29"/>
<dbReference type="FunCoup" id="F1NW29">
    <property type="interactions" value="865"/>
</dbReference>
<dbReference type="STRING" id="9031.ENSGALP00000064624"/>
<dbReference type="PaxDb" id="9031-ENSGALP00000022145"/>
<dbReference type="KEGG" id="gga:421007"/>
<dbReference type="VEuPathDB" id="HostDB:geneid_421007"/>
<dbReference type="eggNOG" id="KOG2756">
    <property type="taxonomic scope" value="Eukaryota"/>
</dbReference>
<dbReference type="HOGENOM" id="CLU_047318_0_0_1"/>
<dbReference type="InParanoid" id="F1NW29"/>
<dbReference type="OrthoDB" id="9975959at2759"/>
<dbReference type="TreeFam" id="TF314813"/>
<dbReference type="Reactome" id="R-GGA-5693571">
    <property type="pathway name" value="Nonhomologous End-Joining (NHEJ)"/>
</dbReference>
<dbReference type="PRO" id="PR:F1NW29"/>
<dbReference type="Proteomes" id="UP000000539">
    <property type="component" value="Chromosome 2"/>
</dbReference>
<dbReference type="Bgee" id="ENSGALG00000013637">
    <property type="expression patterns" value="Expressed in ovary and 13 other cell types or tissues"/>
</dbReference>
<dbReference type="GO" id="GO:0005737">
    <property type="term" value="C:cytoplasm"/>
    <property type="evidence" value="ECO:0000318"/>
    <property type="project" value="GO_Central"/>
</dbReference>
<dbReference type="GO" id="GO:0016605">
    <property type="term" value="C:PML body"/>
    <property type="evidence" value="ECO:0000318"/>
    <property type="project" value="GO_Central"/>
</dbReference>
<dbReference type="GO" id="GO:0070260">
    <property type="term" value="F:5'-tyrosyl-DNA phosphodiesterase activity"/>
    <property type="evidence" value="ECO:0000250"/>
    <property type="project" value="UniProtKB"/>
</dbReference>
<dbReference type="GO" id="GO:0000287">
    <property type="term" value="F:magnesium ion binding"/>
    <property type="evidence" value="ECO:0000250"/>
    <property type="project" value="UniProtKB"/>
</dbReference>
<dbReference type="GO" id="GO:0030145">
    <property type="term" value="F:manganese ion binding"/>
    <property type="evidence" value="ECO:0000250"/>
    <property type="project" value="UniProtKB"/>
</dbReference>
<dbReference type="GO" id="GO:0004518">
    <property type="term" value="F:nuclease activity"/>
    <property type="evidence" value="ECO:0007669"/>
    <property type="project" value="UniProtKB-KW"/>
</dbReference>
<dbReference type="GO" id="GO:0003697">
    <property type="term" value="F:single-stranded DNA binding"/>
    <property type="evidence" value="ECO:0000250"/>
    <property type="project" value="UniProtKB"/>
</dbReference>
<dbReference type="GO" id="GO:0006302">
    <property type="term" value="P:double-strand break repair"/>
    <property type="evidence" value="ECO:0000250"/>
    <property type="project" value="UniProtKB"/>
</dbReference>
<dbReference type="CDD" id="cd09080">
    <property type="entry name" value="TDP2"/>
    <property type="match status" value="1"/>
</dbReference>
<dbReference type="CDD" id="cd14344">
    <property type="entry name" value="UBA_TYDP2"/>
    <property type="match status" value="1"/>
</dbReference>
<dbReference type="FunFam" id="3.60.10.10:FF:000024">
    <property type="entry name" value="Tyrosyl-DNA phosphodiesterase 2"/>
    <property type="match status" value="1"/>
</dbReference>
<dbReference type="Gene3D" id="1.10.8.10">
    <property type="entry name" value="DNA helicase RuvA subunit, C-terminal domain"/>
    <property type="match status" value="1"/>
</dbReference>
<dbReference type="Gene3D" id="3.60.10.10">
    <property type="entry name" value="Endonuclease/exonuclease/phosphatase"/>
    <property type="match status" value="1"/>
</dbReference>
<dbReference type="InterPro" id="IPR036691">
    <property type="entry name" value="Endo/exonu/phosph_ase_sf"/>
</dbReference>
<dbReference type="InterPro" id="IPR005135">
    <property type="entry name" value="Endo/exonuclease/phosphatase"/>
</dbReference>
<dbReference type="InterPro" id="IPR051547">
    <property type="entry name" value="TDP2-like"/>
</dbReference>
<dbReference type="InterPro" id="IPR009060">
    <property type="entry name" value="UBA-like_sf"/>
</dbReference>
<dbReference type="PANTHER" id="PTHR15822">
    <property type="entry name" value="TRAF AND TNF RECEPTOR-ASSOCIATED PROTEIN"/>
    <property type="match status" value="1"/>
</dbReference>
<dbReference type="PANTHER" id="PTHR15822:SF4">
    <property type="entry name" value="TYROSYL-DNA PHOSPHODIESTERASE 2"/>
    <property type="match status" value="1"/>
</dbReference>
<dbReference type="Pfam" id="PF03372">
    <property type="entry name" value="Exo_endo_phos"/>
    <property type="match status" value="1"/>
</dbReference>
<dbReference type="Pfam" id="PF14555">
    <property type="entry name" value="UBA_4"/>
    <property type="match status" value="1"/>
</dbReference>
<dbReference type="SUPFAM" id="SSF56219">
    <property type="entry name" value="DNase I-like"/>
    <property type="match status" value="1"/>
</dbReference>
<dbReference type="SUPFAM" id="SSF46934">
    <property type="entry name" value="UBA-like"/>
    <property type="match status" value="1"/>
</dbReference>
<proteinExistence type="inferred from homology"/>
<keyword id="KW-0217">Developmental protein</keyword>
<keyword id="KW-0227">DNA damage</keyword>
<keyword id="KW-0234">DNA repair</keyword>
<keyword id="KW-0378">Hydrolase</keyword>
<keyword id="KW-0460">Magnesium</keyword>
<keyword id="KW-0479">Metal-binding</keyword>
<keyword id="KW-0540">Nuclease</keyword>
<keyword id="KW-0539">Nucleus</keyword>
<keyword id="KW-1185">Reference proteome</keyword>
<sequence length="369" mass="41002">MELEARAEPRSPRAGRGEEEEDEDEELRLAKRRKVLCSEFAAVTSSDEAVASGFLAGSGWHLERALDAYFEAPMNEQTTAAAAGGGSAGPGSCIDLTADDTASNTSSSGADSKQQDDDSSFSLITWNIDGLDLGNLQERARGVCSYLALYSPDVVFLQEVIPPYLCILQRRAGGYTIIPGNVDGYFTAMLLKKPRVKVLKQEIIRFPTTSMMRNLLVVHVNISGNELCLMTSHLESTRDHSKERMKQLQIVLNKMQEESQSTTVIFGGDTNLRDSEVAKLGGLPKNITDIWEFLGKPQHCRYTWDTSSNTNLRIESKCKLRFDRLYFRPAAEGGHIIPRNMDLIGLEKLDCGRFPSDHWGLLCRFDVIL</sequence>
<protein>
    <recommendedName>
        <fullName>Tyrosyl-DNA phosphodiesterase 2</fullName>
        <shortName>Tyr-DNA phosphodiesterase 2</shortName>
        <ecNumber evidence="2">3.1.4.-</ecNumber>
    </recommendedName>
    <alternativeName>
        <fullName>5'-tyrosyl-DNA phosphodiesterase</fullName>
        <shortName>5'-Tyr-DNA phosphodiesterase</shortName>
    </alternativeName>
</protein>
<gene>
    <name type="primary">TDP2</name>
</gene>
<accession>F1NW29</accession>
<comment type="function">
    <text evidence="2 4">DNA repair enzyme that can remove a variety of covalent adducts from DNA through hydrolysis of a 5'-phosphodiester bond, giving rise to DNA with a free 5' phosphate. Catalyzes the hydrolysis of dead-end complexes between DNA and the topoisomerase 2 (TOP2) active site tyrosine residue. Hydrolyzes 5'-phosphoglycolates on protruding 5' ends on DNA double-strand breaks (DSBs) due to DNA damage by radiation and free radicals. The 5'-tyrosyl DNA phosphodiesterase activity can enable the repair of TOP2-induced DSBs without the need for nuclease activity, creating a 'clean' DSB with 5'-phosphate termini that are ready for ligation (By similarity). Also has 3'-tyrosyl DNA phosphodiesterase activity, but less efficiently and much slower than TDP1.</text>
</comment>
<comment type="cofactor">
    <cofactor evidence="2">
        <name>Mg(2+)</name>
        <dbReference type="ChEBI" id="CHEBI:18420"/>
    </cofactor>
    <cofactor evidence="2">
        <name>Mn(2+)</name>
        <dbReference type="ChEBI" id="CHEBI:29035"/>
    </cofactor>
    <text evidence="2">Binds 1 magnesium or manganese ion per subunit.</text>
</comment>
<comment type="subcellular location">
    <subcellularLocation>
        <location evidence="1">Nucleus</location>
    </subcellularLocation>
    <subcellularLocation>
        <location evidence="1">Nucleus</location>
        <location evidence="1">PML body</location>
    </subcellularLocation>
</comment>
<comment type="miscellaneous">
    <text evidence="6">Can partially complement the absence of TDP1 due to its weak 3'-tyrosyl DNA phosphodiesterase activity.</text>
</comment>
<comment type="similarity">
    <text evidence="5">Belongs to the CCR4/nocturin family. TTRAP/TDP2 subfamily.</text>
</comment>
<feature type="chain" id="PRO_0000419986" description="Tyrosyl-DNA phosphodiesterase 2">
    <location>
        <begin position="1"/>
        <end position="369"/>
    </location>
</feature>
<feature type="region of interest" description="Disordered" evidence="3">
    <location>
        <begin position="1"/>
        <end position="26"/>
    </location>
</feature>
<feature type="region of interest" description="Disordered" evidence="3">
    <location>
        <begin position="80"/>
        <end position="117"/>
    </location>
</feature>
<feature type="region of interest" description="Interaction with 5' end of substrate DNA" evidence="2">
    <location>
        <begin position="127"/>
        <end position="131"/>
    </location>
</feature>
<feature type="region of interest" description="Interaction with 5' end of substrate DNA" evidence="2">
    <location>
        <begin position="233"/>
        <end position="238"/>
    </location>
</feature>
<feature type="region of interest" description="Interaction with 5' end of substrate DNA" evidence="2">
    <location>
        <begin position="271"/>
        <end position="273"/>
    </location>
</feature>
<feature type="compositionally biased region" description="Basic and acidic residues" evidence="3">
    <location>
        <begin position="1"/>
        <end position="17"/>
    </location>
</feature>
<feature type="compositionally biased region" description="Low complexity" evidence="3">
    <location>
        <begin position="99"/>
        <end position="112"/>
    </location>
</feature>
<feature type="active site" description="Proton donor/acceptor" evidence="1">
    <location>
        <position position="269"/>
    </location>
</feature>
<feature type="binding site" evidence="2">
    <location>
        <position position="129"/>
    </location>
    <ligand>
        <name>Mg(2+)</name>
        <dbReference type="ChEBI" id="CHEBI:18420"/>
    </ligand>
</feature>
<feature type="binding site" evidence="2">
    <location>
        <position position="159"/>
    </location>
    <ligand>
        <name>Mg(2+)</name>
        <dbReference type="ChEBI" id="CHEBI:18420"/>
    </ligand>
</feature>
<feature type="site" description="Interaction with 5' end of substrate DNA" evidence="2">
    <location>
        <position position="185"/>
    </location>
</feature>
<feature type="site" description="Interaction with 5' end of substrate DNA" evidence="2">
    <location>
        <position position="304"/>
    </location>
</feature>
<feature type="site" description="Interaction with 5' end of substrate DNA" evidence="2">
    <location>
        <position position="322"/>
    </location>
</feature>
<feature type="site" description="Interaction with 5' end of substrate DNA" evidence="2">
    <location>
        <position position="358"/>
    </location>
</feature>
<reference key="1">
    <citation type="journal article" date="2004" name="Nature">
        <title>Sequence and comparative analysis of the chicken genome provide unique perspectives on vertebrate evolution.</title>
        <authorList>
            <person name="Hillier L.W."/>
            <person name="Miller W."/>
            <person name="Birney E."/>
            <person name="Warren W."/>
            <person name="Hardison R.C."/>
            <person name="Ponting C.P."/>
            <person name="Bork P."/>
            <person name="Burt D.W."/>
            <person name="Groenen M.A.M."/>
            <person name="Delany M.E."/>
            <person name="Dodgson J.B."/>
            <person name="Chinwalla A.T."/>
            <person name="Cliften P.F."/>
            <person name="Clifton S.W."/>
            <person name="Delehaunty K.D."/>
            <person name="Fronick C."/>
            <person name="Fulton R.S."/>
            <person name="Graves T.A."/>
            <person name="Kremitzki C."/>
            <person name="Layman D."/>
            <person name="Magrini V."/>
            <person name="McPherson J.D."/>
            <person name="Miner T.L."/>
            <person name="Minx P."/>
            <person name="Nash W.E."/>
            <person name="Nhan M.N."/>
            <person name="Nelson J.O."/>
            <person name="Oddy L.G."/>
            <person name="Pohl C.S."/>
            <person name="Randall-Maher J."/>
            <person name="Smith S.M."/>
            <person name="Wallis J.W."/>
            <person name="Yang S.-P."/>
            <person name="Romanov M.N."/>
            <person name="Rondelli C.M."/>
            <person name="Paton B."/>
            <person name="Smith J."/>
            <person name="Morrice D."/>
            <person name="Daniels L."/>
            <person name="Tempest H.G."/>
            <person name="Robertson L."/>
            <person name="Masabanda J.S."/>
            <person name="Griffin D.K."/>
            <person name="Vignal A."/>
            <person name="Fillon V."/>
            <person name="Jacobbson L."/>
            <person name="Kerje S."/>
            <person name="Andersson L."/>
            <person name="Crooijmans R.P."/>
            <person name="Aerts J."/>
            <person name="van der Poel J.J."/>
            <person name="Ellegren H."/>
            <person name="Caldwell R.B."/>
            <person name="Hubbard S.J."/>
            <person name="Grafham D.V."/>
            <person name="Kierzek A.M."/>
            <person name="McLaren S.R."/>
            <person name="Overton I.M."/>
            <person name="Arakawa H."/>
            <person name="Beattie K.J."/>
            <person name="Bezzubov Y."/>
            <person name="Boardman P.E."/>
            <person name="Bonfield J.K."/>
            <person name="Croning M.D.R."/>
            <person name="Davies R.M."/>
            <person name="Francis M.D."/>
            <person name="Humphray S.J."/>
            <person name="Scott C.E."/>
            <person name="Taylor R.G."/>
            <person name="Tickle C."/>
            <person name="Brown W.R.A."/>
            <person name="Rogers J."/>
            <person name="Buerstedde J.-M."/>
            <person name="Wilson S.A."/>
            <person name="Stubbs L."/>
            <person name="Ovcharenko I."/>
            <person name="Gordon L."/>
            <person name="Lucas S."/>
            <person name="Miller M.M."/>
            <person name="Inoko H."/>
            <person name="Shiina T."/>
            <person name="Kaufman J."/>
            <person name="Salomonsen J."/>
            <person name="Skjoedt K."/>
            <person name="Wong G.K.-S."/>
            <person name="Wang J."/>
            <person name="Liu B."/>
            <person name="Wang J."/>
            <person name="Yu J."/>
            <person name="Yang H."/>
            <person name="Nefedov M."/>
            <person name="Koriabine M."/>
            <person name="Dejong P.J."/>
            <person name="Goodstadt L."/>
            <person name="Webber C."/>
            <person name="Dickens N.J."/>
            <person name="Letunic I."/>
            <person name="Suyama M."/>
            <person name="Torrents D."/>
            <person name="von Mering C."/>
            <person name="Zdobnov E.M."/>
            <person name="Makova K."/>
            <person name="Nekrutenko A."/>
            <person name="Elnitski L."/>
            <person name="Eswara P."/>
            <person name="King D.C."/>
            <person name="Yang S.-P."/>
            <person name="Tyekucheva S."/>
            <person name="Radakrishnan A."/>
            <person name="Harris R.S."/>
            <person name="Chiaromonte F."/>
            <person name="Taylor J."/>
            <person name="He J."/>
            <person name="Rijnkels M."/>
            <person name="Griffiths-Jones S."/>
            <person name="Ureta-Vidal A."/>
            <person name="Hoffman M.M."/>
            <person name="Severin J."/>
            <person name="Searle S.M.J."/>
            <person name="Law A.S."/>
            <person name="Speed D."/>
            <person name="Waddington D."/>
            <person name="Cheng Z."/>
            <person name="Tuzun E."/>
            <person name="Eichler E."/>
            <person name="Bao Z."/>
            <person name="Flicek P."/>
            <person name="Shteynberg D.D."/>
            <person name="Brent M.R."/>
            <person name="Bye J.M."/>
            <person name="Huckle E.J."/>
            <person name="Chatterji S."/>
            <person name="Dewey C."/>
            <person name="Pachter L."/>
            <person name="Kouranov A."/>
            <person name="Mourelatos Z."/>
            <person name="Hatzigeorgiou A.G."/>
            <person name="Paterson A.H."/>
            <person name="Ivarie R."/>
            <person name="Brandstrom M."/>
            <person name="Axelsson E."/>
            <person name="Backstrom N."/>
            <person name="Berlin S."/>
            <person name="Webster M.T."/>
            <person name="Pourquie O."/>
            <person name="Reymond A."/>
            <person name="Ucla C."/>
            <person name="Antonarakis S.E."/>
            <person name="Long M."/>
            <person name="Emerson J.J."/>
            <person name="Betran E."/>
            <person name="Dupanloup I."/>
            <person name="Kaessmann H."/>
            <person name="Hinrichs A.S."/>
            <person name="Bejerano G."/>
            <person name="Furey T.S."/>
            <person name="Harte R.A."/>
            <person name="Raney B."/>
            <person name="Siepel A."/>
            <person name="Kent W.J."/>
            <person name="Haussler D."/>
            <person name="Eyras E."/>
            <person name="Castelo R."/>
            <person name="Abril J.F."/>
            <person name="Castellano S."/>
            <person name="Camara F."/>
            <person name="Parra G."/>
            <person name="Guigo R."/>
            <person name="Bourque G."/>
            <person name="Tesler G."/>
            <person name="Pevzner P.A."/>
            <person name="Smit A."/>
            <person name="Fulton L.A."/>
            <person name="Mardis E.R."/>
            <person name="Wilson R.K."/>
        </authorList>
    </citation>
    <scope>NUCLEOTIDE SEQUENCE [LARGE SCALE GENOMIC DNA]</scope>
    <source>
        <strain>Red jungle fowl</strain>
    </source>
</reference>
<reference key="2">
    <citation type="journal article" date="2012" name="Nucleic Acids Res.">
        <title>TDP2 promotes repair of topoisomerase I-mediated DNA damage in the absence of TDP1.</title>
        <authorList>
            <person name="Zeng Z."/>
            <person name="Sharma A."/>
            <person name="Ju L."/>
            <person name="Murai J."/>
            <person name="Umans L."/>
            <person name="Vermeire L."/>
            <person name="Pommier Y."/>
            <person name="Takeda S."/>
            <person name="Huylebroeck D."/>
            <person name="Caldecott K.W."/>
            <person name="El-Khamisy S.F."/>
        </authorList>
    </citation>
    <scope>FUNCTION</scope>
</reference>
<name>TYDP2_CHICK</name>
<organism>
    <name type="scientific">Gallus gallus</name>
    <name type="common">Chicken</name>
    <dbReference type="NCBI Taxonomy" id="9031"/>
    <lineage>
        <taxon>Eukaryota</taxon>
        <taxon>Metazoa</taxon>
        <taxon>Chordata</taxon>
        <taxon>Craniata</taxon>
        <taxon>Vertebrata</taxon>
        <taxon>Euteleostomi</taxon>
        <taxon>Archelosauria</taxon>
        <taxon>Archosauria</taxon>
        <taxon>Dinosauria</taxon>
        <taxon>Saurischia</taxon>
        <taxon>Theropoda</taxon>
        <taxon>Coelurosauria</taxon>
        <taxon>Aves</taxon>
        <taxon>Neognathae</taxon>
        <taxon>Galloanserae</taxon>
        <taxon>Galliformes</taxon>
        <taxon>Phasianidae</taxon>
        <taxon>Phasianinae</taxon>
        <taxon>Gallus</taxon>
    </lineage>
</organism>